<evidence type="ECO:0000255" key="1">
    <source>
        <dbReference type="HAMAP-Rule" id="MF_00059"/>
    </source>
</evidence>
<evidence type="ECO:0000305" key="2"/>
<evidence type="ECO:0007829" key="3">
    <source>
        <dbReference type="PDB" id="8XZV"/>
    </source>
</evidence>
<gene>
    <name evidence="1" type="primary">rpoA</name>
</gene>
<feature type="chain" id="PRO_0000175498" description="DNA-directed RNA polymerase subunit alpha">
    <location>
        <begin position="1"/>
        <end position="335"/>
    </location>
</feature>
<feature type="region of interest" description="Alpha N-terminal domain (alpha-NTD)" evidence="1">
    <location>
        <begin position="1"/>
        <end position="233"/>
    </location>
</feature>
<feature type="region of interest" description="Alpha C-terminal domain (alpha-CTD)" evidence="1">
    <location>
        <begin position="263"/>
        <end position="335"/>
    </location>
</feature>
<feature type="sequence conflict" description="In Ref. 1; CAA27214." evidence="2" ref="1">
    <original>T</original>
    <variation>A</variation>
    <location>
        <position position="103"/>
    </location>
</feature>
<feature type="strand" evidence="3">
    <location>
        <begin position="15"/>
        <end position="24"/>
    </location>
</feature>
<feature type="strand" evidence="3">
    <location>
        <begin position="27"/>
        <end position="38"/>
    </location>
</feature>
<feature type="helix" evidence="3">
    <location>
        <begin position="41"/>
        <end position="55"/>
    </location>
</feature>
<feature type="strand" evidence="3">
    <location>
        <begin position="59"/>
        <end position="69"/>
    </location>
</feature>
<feature type="strand" evidence="3">
    <location>
        <begin position="80"/>
        <end position="82"/>
    </location>
</feature>
<feature type="helix" evidence="3">
    <location>
        <begin position="84"/>
        <end position="91"/>
    </location>
</feature>
<feature type="strand" evidence="3">
    <location>
        <begin position="104"/>
        <end position="110"/>
    </location>
</feature>
<feature type="strand" evidence="3">
    <location>
        <begin position="112"/>
        <end position="114"/>
    </location>
</feature>
<feature type="helix" evidence="3">
    <location>
        <begin position="118"/>
        <end position="120"/>
    </location>
</feature>
<feature type="strand" evidence="3">
    <location>
        <begin position="128"/>
        <end position="130"/>
    </location>
</feature>
<feature type="strand" evidence="3">
    <location>
        <begin position="135"/>
        <end position="137"/>
    </location>
</feature>
<feature type="strand" evidence="3">
    <location>
        <begin position="145"/>
        <end position="157"/>
    </location>
</feature>
<feature type="strand" evidence="3">
    <location>
        <begin position="169"/>
        <end position="171"/>
    </location>
</feature>
<feature type="strand" evidence="3">
    <location>
        <begin position="179"/>
        <end position="186"/>
    </location>
</feature>
<feature type="strand" evidence="3">
    <location>
        <begin position="196"/>
        <end position="205"/>
    </location>
</feature>
<feature type="strand" evidence="3">
    <location>
        <begin position="207"/>
        <end position="209"/>
    </location>
</feature>
<feature type="turn" evidence="3">
    <location>
        <begin position="211"/>
        <end position="213"/>
    </location>
</feature>
<feature type="helix" evidence="3">
    <location>
        <begin position="214"/>
        <end position="225"/>
    </location>
</feature>
<feature type="helix" evidence="3">
    <location>
        <begin position="228"/>
        <end position="230"/>
    </location>
</feature>
<keyword id="KW-0002">3D-structure</keyword>
<keyword id="KW-0150">Chloroplast</keyword>
<keyword id="KW-0240">DNA-directed RNA polymerase</keyword>
<keyword id="KW-0548">Nucleotidyltransferase</keyword>
<keyword id="KW-0934">Plastid</keyword>
<keyword id="KW-1185">Reference proteome</keyword>
<keyword id="KW-0804">Transcription</keyword>
<keyword id="KW-0808">Transferase</keyword>
<accession>P06505</accession>
<accession>Q9M3K2</accession>
<reference key="1">
    <citation type="journal article" date="1986" name="Nucleic Acids Res.">
        <title>Spinach plastid genes coding for initiation factor IF-1, ribosomal protein S11 and RNA polymerase alpha-subunit.</title>
        <authorList>
            <person name="Sijben-Mueller G."/>
            <person name="Hallick R.B."/>
            <person name="Alt J."/>
            <person name="Westhoff P."/>
            <person name="Herrmann R.G."/>
        </authorList>
    </citation>
    <scope>NUCLEOTIDE SEQUENCE [GENOMIC DNA]</scope>
</reference>
<reference key="2">
    <citation type="journal article" date="2001" name="Plant Mol. Biol.">
        <title>The plastid chromosome of spinach (Spinacia oleracea): complete nucleotide sequence and gene organization.</title>
        <authorList>
            <person name="Schmitz-Linneweber C."/>
            <person name="Maier R.M."/>
            <person name="Alcaraz J.-P."/>
            <person name="Cottet A."/>
            <person name="Herrmann R.G."/>
            <person name="Mache R."/>
        </authorList>
    </citation>
    <scope>NUCLEOTIDE SEQUENCE [LARGE SCALE GENOMIC DNA]</scope>
    <source>
        <strain>cv. Geant d'hiver</strain>
        <strain>cv. Monatol</strain>
    </source>
</reference>
<comment type="function">
    <text evidence="1">DNA-dependent RNA polymerase catalyzes the transcription of DNA into RNA using the four ribonucleoside triphosphates as substrates.</text>
</comment>
<comment type="catalytic activity">
    <reaction evidence="1">
        <text>RNA(n) + a ribonucleoside 5'-triphosphate = RNA(n+1) + diphosphate</text>
        <dbReference type="Rhea" id="RHEA:21248"/>
        <dbReference type="Rhea" id="RHEA-COMP:14527"/>
        <dbReference type="Rhea" id="RHEA-COMP:17342"/>
        <dbReference type="ChEBI" id="CHEBI:33019"/>
        <dbReference type="ChEBI" id="CHEBI:61557"/>
        <dbReference type="ChEBI" id="CHEBI:140395"/>
        <dbReference type="EC" id="2.7.7.6"/>
    </reaction>
</comment>
<comment type="subunit">
    <text evidence="1">In plastids the minimal PEP RNA polymerase catalytic core is composed of four subunits: alpha, beta, beta', and beta''. When a (nuclear-encoded) sigma factor is associated with the core the holoenzyme is formed, which can initiate transcription.</text>
</comment>
<comment type="subcellular location">
    <subcellularLocation>
        <location>Plastid</location>
        <location>Chloroplast</location>
    </subcellularLocation>
</comment>
<comment type="domain">
    <text evidence="1">The N-terminal domain is essential for RNAP assembly and basal transcription, whereas the C-terminal domain is involved in interaction with transcriptional regulators and with upstream promoter elements.</text>
</comment>
<comment type="similarity">
    <text evidence="1">Belongs to the RNA polymerase alpha chain family.</text>
</comment>
<sequence>MVREKIRVSTQTLQWKCVESRTDSKCLHYGRFILSPLMKGQADTIGIAMRRALLGEIEGTCITRAKSEKIPHEYSTILGIQESVHEILMNLKEIVLRSNLYGTCEASICVRGPRGVTAQDIILPPYVEIVDNTQHIASLTEPIDLCIGLQLERNRGYHIKAPNNFQDGSFPIDALFMPVRNVNHSIHSYGNGNEKQEILFLEIWTNGSLTPKEALYEASRNLIDLLIPFLHAEENVNLEDNQHKVSLPLFTFHNRLAEIRKNKKKIALKFIFIDQLELPPRIYNCLKKSNIHTLLDLLNNSQEDLIKMKHFRIEDVKQIFGTLEKHFVIDLKNKR</sequence>
<name>RPOA_SPIOL</name>
<geneLocation type="chloroplast"/>
<protein>
    <recommendedName>
        <fullName evidence="1">DNA-directed RNA polymerase subunit alpha</fullName>
        <shortName evidence="1">PEP</shortName>
        <ecNumber evidence="1">2.7.7.6</ecNumber>
    </recommendedName>
    <alternativeName>
        <fullName evidence="1">Plastid-encoded RNA polymerase subunit alpha</fullName>
        <shortName evidence="1">RNA polymerase subunit alpha</shortName>
    </alternativeName>
</protein>
<organism>
    <name type="scientific">Spinacia oleracea</name>
    <name type="common">Spinach</name>
    <dbReference type="NCBI Taxonomy" id="3562"/>
    <lineage>
        <taxon>Eukaryota</taxon>
        <taxon>Viridiplantae</taxon>
        <taxon>Streptophyta</taxon>
        <taxon>Embryophyta</taxon>
        <taxon>Tracheophyta</taxon>
        <taxon>Spermatophyta</taxon>
        <taxon>Magnoliopsida</taxon>
        <taxon>eudicotyledons</taxon>
        <taxon>Gunneridae</taxon>
        <taxon>Pentapetalae</taxon>
        <taxon>Caryophyllales</taxon>
        <taxon>Chenopodiaceae</taxon>
        <taxon>Chenopodioideae</taxon>
        <taxon>Anserineae</taxon>
        <taxon>Spinacia</taxon>
    </lineage>
</organism>
<proteinExistence type="evidence at protein level"/>
<dbReference type="EC" id="2.7.7.6" evidence="1"/>
<dbReference type="EMBL" id="X03496">
    <property type="protein sequence ID" value="CAA27214.1"/>
    <property type="molecule type" value="Genomic_DNA"/>
</dbReference>
<dbReference type="EMBL" id="AJ400848">
    <property type="protein sequence ID" value="CAB88759.1"/>
    <property type="molecule type" value="Genomic_DNA"/>
</dbReference>
<dbReference type="PIR" id="C23525">
    <property type="entry name" value="C23525"/>
</dbReference>
<dbReference type="RefSeq" id="NP_054966.1">
    <property type="nucleotide sequence ID" value="NC_002202.1"/>
</dbReference>
<dbReference type="PDB" id="8XZV">
    <property type="method" value="EM"/>
    <property type="resolution" value="3.16 A"/>
    <property type="chains" value="A/O=1-335"/>
</dbReference>
<dbReference type="PDBsum" id="8XZV"/>
<dbReference type="EMDB" id="EMD-38799"/>
<dbReference type="SMR" id="P06505"/>
<dbReference type="FunCoup" id="P06505">
    <property type="interactions" value="114"/>
</dbReference>
<dbReference type="STRING" id="3562.P06505"/>
<dbReference type="GeneID" id="2715631"/>
<dbReference type="KEGG" id="soe:2715631"/>
<dbReference type="InParanoid" id="P06505"/>
<dbReference type="OrthoDB" id="360088at2759"/>
<dbReference type="Proteomes" id="UP001155700">
    <property type="component" value="Chloroplast Pltd"/>
</dbReference>
<dbReference type="GO" id="GO:0009507">
    <property type="term" value="C:chloroplast"/>
    <property type="evidence" value="ECO:0007669"/>
    <property type="project" value="UniProtKB-SubCell"/>
</dbReference>
<dbReference type="GO" id="GO:0000428">
    <property type="term" value="C:DNA-directed RNA polymerase complex"/>
    <property type="evidence" value="ECO:0007669"/>
    <property type="project" value="UniProtKB-KW"/>
</dbReference>
<dbReference type="GO" id="GO:0005739">
    <property type="term" value="C:mitochondrion"/>
    <property type="evidence" value="ECO:0007669"/>
    <property type="project" value="GOC"/>
</dbReference>
<dbReference type="GO" id="GO:0003677">
    <property type="term" value="F:DNA binding"/>
    <property type="evidence" value="ECO:0007669"/>
    <property type="project" value="UniProtKB-UniRule"/>
</dbReference>
<dbReference type="GO" id="GO:0003899">
    <property type="term" value="F:DNA-directed RNA polymerase activity"/>
    <property type="evidence" value="ECO:0007669"/>
    <property type="project" value="UniProtKB-UniRule"/>
</dbReference>
<dbReference type="GO" id="GO:0046983">
    <property type="term" value="F:protein dimerization activity"/>
    <property type="evidence" value="ECO:0007669"/>
    <property type="project" value="InterPro"/>
</dbReference>
<dbReference type="GO" id="GO:0006351">
    <property type="term" value="P:DNA-templated transcription"/>
    <property type="evidence" value="ECO:0007669"/>
    <property type="project" value="UniProtKB-UniRule"/>
</dbReference>
<dbReference type="CDD" id="cd06928">
    <property type="entry name" value="RNAP_alpha_NTD"/>
    <property type="match status" value="1"/>
</dbReference>
<dbReference type="FunFam" id="1.10.150.20:FF:000021">
    <property type="entry name" value="DNA-directed RNA polymerase subunit alpha"/>
    <property type="match status" value="1"/>
</dbReference>
<dbReference type="FunFam" id="2.170.120.12:FF:000001">
    <property type="entry name" value="DNA-directed RNA polymerase subunit alpha"/>
    <property type="match status" value="1"/>
</dbReference>
<dbReference type="FunFam" id="3.30.1360.10:FF:000039">
    <property type="entry name" value="DNA-directed RNA polymerase subunit alpha"/>
    <property type="match status" value="1"/>
</dbReference>
<dbReference type="Gene3D" id="1.10.150.20">
    <property type="entry name" value="5' to 3' exonuclease, C-terminal subdomain"/>
    <property type="match status" value="1"/>
</dbReference>
<dbReference type="Gene3D" id="2.170.120.12">
    <property type="entry name" value="DNA-directed RNA polymerase, insert domain"/>
    <property type="match status" value="1"/>
</dbReference>
<dbReference type="Gene3D" id="3.30.1360.10">
    <property type="entry name" value="RNA polymerase, RBP11-like subunit"/>
    <property type="match status" value="1"/>
</dbReference>
<dbReference type="HAMAP" id="MF_00059">
    <property type="entry name" value="RNApol_bact_RpoA"/>
    <property type="match status" value="1"/>
</dbReference>
<dbReference type="InterPro" id="IPR011262">
    <property type="entry name" value="DNA-dir_RNA_pol_insert"/>
</dbReference>
<dbReference type="InterPro" id="IPR011263">
    <property type="entry name" value="DNA-dir_RNA_pol_RpoA/D/Rpb3"/>
</dbReference>
<dbReference type="InterPro" id="IPR011773">
    <property type="entry name" value="DNA-dir_RpoA"/>
</dbReference>
<dbReference type="InterPro" id="IPR036603">
    <property type="entry name" value="RBP11-like"/>
</dbReference>
<dbReference type="InterPro" id="IPR011260">
    <property type="entry name" value="RNAP_asu_C"/>
</dbReference>
<dbReference type="InterPro" id="IPR036643">
    <property type="entry name" value="RNApol_insert_sf"/>
</dbReference>
<dbReference type="NCBIfam" id="TIGR02027">
    <property type="entry name" value="rpoA"/>
    <property type="match status" value="1"/>
</dbReference>
<dbReference type="Pfam" id="PF01000">
    <property type="entry name" value="RNA_pol_A_bac"/>
    <property type="match status" value="1"/>
</dbReference>
<dbReference type="Pfam" id="PF03118">
    <property type="entry name" value="RNA_pol_A_CTD"/>
    <property type="match status" value="1"/>
</dbReference>
<dbReference type="Pfam" id="PF01193">
    <property type="entry name" value="RNA_pol_L"/>
    <property type="match status" value="1"/>
</dbReference>
<dbReference type="SMART" id="SM00662">
    <property type="entry name" value="RPOLD"/>
    <property type="match status" value="1"/>
</dbReference>
<dbReference type="SUPFAM" id="SSF47789">
    <property type="entry name" value="C-terminal domain of RNA polymerase alpha subunit"/>
    <property type="match status" value="1"/>
</dbReference>
<dbReference type="SUPFAM" id="SSF56553">
    <property type="entry name" value="Insert subdomain of RNA polymerase alpha subunit"/>
    <property type="match status" value="1"/>
</dbReference>
<dbReference type="SUPFAM" id="SSF55257">
    <property type="entry name" value="RBP11-like subunits of RNA polymerase"/>
    <property type="match status" value="1"/>
</dbReference>